<comment type="function">
    <text evidence="1">Involved in peptide bond synthesis. Stimulates efficient translation and peptide-bond synthesis on native or reconstituted 70S ribosomes in vitro. Probably functions indirectly by altering the affinity of the ribosome for aminoacyl-tRNA, thus increasing their reactivity as acceptors for peptidyl transferase.</text>
</comment>
<comment type="pathway">
    <text evidence="1">Protein biosynthesis; polypeptide chain elongation.</text>
</comment>
<comment type="subcellular location">
    <subcellularLocation>
        <location evidence="1">Cytoplasm</location>
    </subcellularLocation>
</comment>
<comment type="similarity">
    <text evidence="1">Belongs to the elongation factor P family.</text>
</comment>
<gene>
    <name evidence="1" type="primary">efp</name>
    <name type="ordered locus">Mnod_1884</name>
</gene>
<evidence type="ECO:0000255" key="1">
    <source>
        <dbReference type="HAMAP-Rule" id="MF_00141"/>
    </source>
</evidence>
<evidence type="ECO:0000256" key="2">
    <source>
        <dbReference type="SAM" id="MobiDB-lite"/>
    </source>
</evidence>
<keyword id="KW-0963">Cytoplasm</keyword>
<keyword id="KW-0251">Elongation factor</keyword>
<keyword id="KW-0648">Protein biosynthesis</keyword>
<keyword id="KW-1185">Reference proteome</keyword>
<dbReference type="EMBL" id="CP001349">
    <property type="protein sequence ID" value="ACL56873.1"/>
    <property type="molecule type" value="Genomic_DNA"/>
</dbReference>
<dbReference type="RefSeq" id="WP_015928564.1">
    <property type="nucleotide sequence ID" value="NC_011894.1"/>
</dbReference>
<dbReference type="SMR" id="B8IS61"/>
<dbReference type="STRING" id="460265.Mnod_1884"/>
<dbReference type="KEGG" id="mno:Mnod_1884"/>
<dbReference type="eggNOG" id="COG0231">
    <property type="taxonomic scope" value="Bacteria"/>
</dbReference>
<dbReference type="HOGENOM" id="CLU_074944_1_1_5"/>
<dbReference type="OrthoDB" id="9801844at2"/>
<dbReference type="UniPathway" id="UPA00345"/>
<dbReference type="Proteomes" id="UP000008207">
    <property type="component" value="Chromosome"/>
</dbReference>
<dbReference type="GO" id="GO:0005737">
    <property type="term" value="C:cytoplasm"/>
    <property type="evidence" value="ECO:0007669"/>
    <property type="project" value="UniProtKB-SubCell"/>
</dbReference>
<dbReference type="GO" id="GO:0003746">
    <property type="term" value="F:translation elongation factor activity"/>
    <property type="evidence" value="ECO:0007669"/>
    <property type="project" value="UniProtKB-UniRule"/>
</dbReference>
<dbReference type="GO" id="GO:0043043">
    <property type="term" value="P:peptide biosynthetic process"/>
    <property type="evidence" value="ECO:0007669"/>
    <property type="project" value="InterPro"/>
</dbReference>
<dbReference type="CDD" id="cd04470">
    <property type="entry name" value="S1_EF-P_repeat_1"/>
    <property type="match status" value="1"/>
</dbReference>
<dbReference type="CDD" id="cd05794">
    <property type="entry name" value="S1_EF-P_repeat_2"/>
    <property type="match status" value="1"/>
</dbReference>
<dbReference type="FunFam" id="2.40.50.140:FF:000004">
    <property type="entry name" value="Elongation factor P"/>
    <property type="match status" value="1"/>
</dbReference>
<dbReference type="FunFam" id="2.40.50.140:FF:000009">
    <property type="entry name" value="Elongation factor P"/>
    <property type="match status" value="1"/>
</dbReference>
<dbReference type="Gene3D" id="2.30.30.30">
    <property type="match status" value="1"/>
</dbReference>
<dbReference type="Gene3D" id="2.40.50.140">
    <property type="entry name" value="Nucleic acid-binding proteins"/>
    <property type="match status" value="2"/>
</dbReference>
<dbReference type="HAMAP" id="MF_00141">
    <property type="entry name" value="EF_P"/>
    <property type="match status" value="1"/>
</dbReference>
<dbReference type="InterPro" id="IPR015365">
    <property type="entry name" value="Elong-fact-P_C"/>
</dbReference>
<dbReference type="InterPro" id="IPR012340">
    <property type="entry name" value="NA-bd_OB-fold"/>
</dbReference>
<dbReference type="InterPro" id="IPR014722">
    <property type="entry name" value="Rib_uL2_dom2"/>
</dbReference>
<dbReference type="InterPro" id="IPR020599">
    <property type="entry name" value="Transl_elong_fac_P/YeiP"/>
</dbReference>
<dbReference type="InterPro" id="IPR013185">
    <property type="entry name" value="Transl_elong_KOW-like"/>
</dbReference>
<dbReference type="InterPro" id="IPR001059">
    <property type="entry name" value="Transl_elong_P/YeiP_cen"/>
</dbReference>
<dbReference type="InterPro" id="IPR013852">
    <property type="entry name" value="Transl_elong_P/YeiP_CS"/>
</dbReference>
<dbReference type="InterPro" id="IPR011768">
    <property type="entry name" value="Transl_elongation_fac_P"/>
</dbReference>
<dbReference type="InterPro" id="IPR008991">
    <property type="entry name" value="Translation_prot_SH3-like_sf"/>
</dbReference>
<dbReference type="NCBIfam" id="TIGR00038">
    <property type="entry name" value="efp"/>
    <property type="match status" value="1"/>
</dbReference>
<dbReference type="NCBIfam" id="NF001810">
    <property type="entry name" value="PRK00529.1"/>
    <property type="match status" value="1"/>
</dbReference>
<dbReference type="PANTHER" id="PTHR30053">
    <property type="entry name" value="ELONGATION FACTOR P"/>
    <property type="match status" value="1"/>
</dbReference>
<dbReference type="PANTHER" id="PTHR30053:SF14">
    <property type="entry name" value="TRANSLATION ELONGATION FACTOR KOW-LIKE DOMAIN-CONTAINING PROTEIN"/>
    <property type="match status" value="1"/>
</dbReference>
<dbReference type="Pfam" id="PF01132">
    <property type="entry name" value="EFP"/>
    <property type="match status" value="1"/>
</dbReference>
<dbReference type="Pfam" id="PF08207">
    <property type="entry name" value="EFP_N"/>
    <property type="match status" value="1"/>
</dbReference>
<dbReference type="Pfam" id="PF09285">
    <property type="entry name" value="Elong-fact-P_C"/>
    <property type="match status" value="1"/>
</dbReference>
<dbReference type="PIRSF" id="PIRSF005901">
    <property type="entry name" value="EF-P"/>
    <property type="match status" value="1"/>
</dbReference>
<dbReference type="SMART" id="SM01185">
    <property type="entry name" value="EFP"/>
    <property type="match status" value="1"/>
</dbReference>
<dbReference type="SMART" id="SM00841">
    <property type="entry name" value="Elong-fact-P_C"/>
    <property type="match status" value="1"/>
</dbReference>
<dbReference type="SUPFAM" id="SSF50249">
    <property type="entry name" value="Nucleic acid-binding proteins"/>
    <property type="match status" value="2"/>
</dbReference>
<dbReference type="SUPFAM" id="SSF50104">
    <property type="entry name" value="Translation proteins SH3-like domain"/>
    <property type="match status" value="1"/>
</dbReference>
<dbReference type="PROSITE" id="PS01275">
    <property type="entry name" value="EFP"/>
    <property type="match status" value="1"/>
</dbReference>
<reference key="1">
    <citation type="submission" date="2009-01" db="EMBL/GenBank/DDBJ databases">
        <title>Complete sequence of chromosome of Methylobacterium nodulans ORS 2060.</title>
        <authorList>
            <consortium name="US DOE Joint Genome Institute"/>
            <person name="Lucas S."/>
            <person name="Copeland A."/>
            <person name="Lapidus A."/>
            <person name="Glavina del Rio T."/>
            <person name="Dalin E."/>
            <person name="Tice H."/>
            <person name="Bruce D."/>
            <person name="Goodwin L."/>
            <person name="Pitluck S."/>
            <person name="Sims D."/>
            <person name="Brettin T."/>
            <person name="Detter J.C."/>
            <person name="Han C."/>
            <person name="Larimer F."/>
            <person name="Land M."/>
            <person name="Hauser L."/>
            <person name="Kyrpides N."/>
            <person name="Ivanova N."/>
            <person name="Marx C.J."/>
            <person name="Richardson P."/>
        </authorList>
    </citation>
    <scope>NUCLEOTIDE SEQUENCE [LARGE SCALE GENOMIC DNA]</scope>
    <source>
        <strain>LMG 21967 / CNCM I-2342 / ORS 2060</strain>
    </source>
</reference>
<sequence>MKVIASSLRKGNVVEKDGRLYVILSAENIHPGKGTPVTQLDMRRITDGVKVSERYRTTEQVERAFVEDREHTFLYSDGEGFHFMNPESYEQVAVPEDVIGDQAAYLQEGMAVMLSLHNGVPLAIELPQRVTLEVTETEPVTKGQTASSSYKPATLSNGVRTQVPPHITAGTRVVIMTADGSYVERAKD</sequence>
<accession>B8IS61</accession>
<feature type="chain" id="PRO_1000123017" description="Elongation factor P">
    <location>
        <begin position="1"/>
        <end position="188"/>
    </location>
</feature>
<feature type="region of interest" description="Disordered" evidence="2">
    <location>
        <begin position="139"/>
        <end position="163"/>
    </location>
</feature>
<feature type="compositionally biased region" description="Polar residues" evidence="2">
    <location>
        <begin position="142"/>
        <end position="160"/>
    </location>
</feature>
<organism>
    <name type="scientific">Methylobacterium nodulans (strain LMG 21967 / CNCM I-2342 / ORS 2060)</name>
    <dbReference type="NCBI Taxonomy" id="460265"/>
    <lineage>
        <taxon>Bacteria</taxon>
        <taxon>Pseudomonadati</taxon>
        <taxon>Pseudomonadota</taxon>
        <taxon>Alphaproteobacteria</taxon>
        <taxon>Hyphomicrobiales</taxon>
        <taxon>Methylobacteriaceae</taxon>
        <taxon>Methylobacterium</taxon>
    </lineage>
</organism>
<name>EFP_METNO</name>
<proteinExistence type="inferred from homology"/>
<protein>
    <recommendedName>
        <fullName evidence="1">Elongation factor P</fullName>
        <shortName evidence="1">EF-P</shortName>
    </recommendedName>
</protein>